<name>G6PI_BURCJ</name>
<evidence type="ECO:0000255" key="1">
    <source>
        <dbReference type="HAMAP-Rule" id="MF_00473"/>
    </source>
</evidence>
<gene>
    <name evidence="1" type="primary">pgi</name>
    <name type="ordered locus">BceJ2315_19530</name>
    <name type="ORF">BCAL1990</name>
</gene>
<proteinExistence type="inferred from homology"/>
<organism>
    <name type="scientific">Burkholderia cenocepacia (strain ATCC BAA-245 / DSM 16553 / LMG 16656 / NCTC 13227 / J2315 / CF5610)</name>
    <name type="common">Burkholderia cepacia (strain J2315)</name>
    <dbReference type="NCBI Taxonomy" id="216591"/>
    <lineage>
        <taxon>Bacteria</taxon>
        <taxon>Pseudomonadati</taxon>
        <taxon>Pseudomonadota</taxon>
        <taxon>Betaproteobacteria</taxon>
        <taxon>Burkholderiales</taxon>
        <taxon>Burkholderiaceae</taxon>
        <taxon>Burkholderia</taxon>
        <taxon>Burkholderia cepacia complex</taxon>
    </lineage>
</organism>
<dbReference type="EC" id="5.3.1.9" evidence="1"/>
<dbReference type="EMBL" id="AM747720">
    <property type="protein sequence ID" value="CAR52290.1"/>
    <property type="molecule type" value="Genomic_DNA"/>
</dbReference>
<dbReference type="RefSeq" id="WP_006489351.1">
    <property type="nucleotide sequence ID" value="NC_011000.1"/>
</dbReference>
<dbReference type="SMR" id="B4EBL7"/>
<dbReference type="KEGG" id="bcj:BCAL1990"/>
<dbReference type="eggNOG" id="COG0166">
    <property type="taxonomic scope" value="Bacteria"/>
</dbReference>
<dbReference type="HOGENOM" id="CLU_017947_3_1_4"/>
<dbReference type="BioCyc" id="BCEN216591:G1G1V-2183-MONOMER"/>
<dbReference type="UniPathway" id="UPA00109">
    <property type="reaction ID" value="UER00181"/>
</dbReference>
<dbReference type="UniPathway" id="UPA00138"/>
<dbReference type="Proteomes" id="UP000001035">
    <property type="component" value="Chromosome 1"/>
</dbReference>
<dbReference type="GO" id="GO:0005829">
    <property type="term" value="C:cytosol"/>
    <property type="evidence" value="ECO:0007669"/>
    <property type="project" value="TreeGrafter"/>
</dbReference>
<dbReference type="GO" id="GO:0097367">
    <property type="term" value="F:carbohydrate derivative binding"/>
    <property type="evidence" value="ECO:0007669"/>
    <property type="project" value="InterPro"/>
</dbReference>
<dbReference type="GO" id="GO:0004347">
    <property type="term" value="F:glucose-6-phosphate isomerase activity"/>
    <property type="evidence" value="ECO:0007669"/>
    <property type="project" value="UniProtKB-UniRule"/>
</dbReference>
<dbReference type="GO" id="GO:0048029">
    <property type="term" value="F:monosaccharide binding"/>
    <property type="evidence" value="ECO:0007669"/>
    <property type="project" value="TreeGrafter"/>
</dbReference>
<dbReference type="GO" id="GO:0006094">
    <property type="term" value="P:gluconeogenesis"/>
    <property type="evidence" value="ECO:0007669"/>
    <property type="project" value="UniProtKB-UniRule"/>
</dbReference>
<dbReference type="GO" id="GO:0051156">
    <property type="term" value="P:glucose 6-phosphate metabolic process"/>
    <property type="evidence" value="ECO:0007669"/>
    <property type="project" value="TreeGrafter"/>
</dbReference>
<dbReference type="GO" id="GO:0006096">
    <property type="term" value="P:glycolytic process"/>
    <property type="evidence" value="ECO:0007669"/>
    <property type="project" value="UniProtKB-UniRule"/>
</dbReference>
<dbReference type="CDD" id="cd05015">
    <property type="entry name" value="SIS_PGI_1"/>
    <property type="match status" value="1"/>
</dbReference>
<dbReference type="CDD" id="cd05016">
    <property type="entry name" value="SIS_PGI_2"/>
    <property type="match status" value="1"/>
</dbReference>
<dbReference type="Gene3D" id="1.10.1390.10">
    <property type="match status" value="1"/>
</dbReference>
<dbReference type="Gene3D" id="3.40.50.10490">
    <property type="entry name" value="Glucose-6-phosphate isomerase like protein, domain 1"/>
    <property type="match status" value="2"/>
</dbReference>
<dbReference type="HAMAP" id="MF_00473">
    <property type="entry name" value="G6P_isomerase"/>
    <property type="match status" value="1"/>
</dbReference>
<dbReference type="InterPro" id="IPR001672">
    <property type="entry name" value="G6P_Isomerase"/>
</dbReference>
<dbReference type="InterPro" id="IPR023096">
    <property type="entry name" value="G6P_Isomerase_C"/>
</dbReference>
<dbReference type="InterPro" id="IPR018189">
    <property type="entry name" value="Phosphoglucose_isomerase_CS"/>
</dbReference>
<dbReference type="InterPro" id="IPR046348">
    <property type="entry name" value="SIS_dom_sf"/>
</dbReference>
<dbReference type="InterPro" id="IPR035476">
    <property type="entry name" value="SIS_PGI_1"/>
</dbReference>
<dbReference type="InterPro" id="IPR035482">
    <property type="entry name" value="SIS_PGI_2"/>
</dbReference>
<dbReference type="NCBIfam" id="NF001211">
    <property type="entry name" value="PRK00179.1"/>
    <property type="match status" value="1"/>
</dbReference>
<dbReference type="PANTHER" id="PTHR11469">
    <property type="entry name" value="GLUCOSE-6-PHOSPHATE ISOMERASE"/>
    <property type="match status" value="1"/>
</dbReference>
<dbReference type="PANTHER" id="PTHR11469:SF1">
    <property type="entry name" value="GLUCOSE-6-PHOSPHATE ISOMERASE"/>
    <property type="match status" value="1"/>
</dbReference>
<dbReference type="Pfam" id="PF00342">
    <property type="entry name" value="PGI"/>
    <property type="match status" value="1"/>
</dbReference>
<dbReference type="PRINTS" id="PR00662">
    <property type="entry name" value="G6PISOMERASE"/>
</dbReference>
<dbReference type="SUPFAM" id="SSF53697">
    <property type="entry name" value="SIS domain"/>
    <property type="match status" value="1"/>
</dbReference>
<dbReference type="PROSITE" id="PS00765">
    <property type="entry name" value="P_GLUCOSE_ISOMERASE_1"/>
    <property type="match status" value="1"/>
</dbReference>
<dbReference type="PROSITE" id="PS00174">
    <property type="entry name" value="P_GLUCOSE_ISOMERASE_2"/>
    <property type="match status" value="1"/>
</dbReference>
<dbReference type="PROSITE" id="PS51463">
    <property type="entry name" value="P_GLUCOSE_ISOMERASE_3"/>
    <property type="match status" value="1"/>
</dbReference>
<keyword id="KW-0963">Cytoplasm</keyword>
<keyword id="KW-0312">Gluconeogenesis</keyword>
<keyword id="KW-0324">Glycolysis</keyword>
<keyword id="KW-0413">Isomerase</keyword>
<feature type="chain" id="PRO_1000125701" description="Glucose-6-phosphate isomerase">
    <location>
        <begin position="1"/>
        <end position="540"/>
    </location>
</feature>
<feature type="active site" description="Proton donor" evidence="1">
    <location>
        <position position="350"/>
    </location>
</feature>
<feature type="active site" evidence="1">
    <location>
        <position position="381"/>
    </location>
</feature>
<feature type="active site" evidence="1">
    <location>
        <position position="503"/>
    </location>
</feature>
<comment type="function">
    <text evidence="1">Catalyzes the reversible isomerization of glucose-6-phosphate to fructose-6-phosphate.</text>
</comment>
<comment type="catalytic activity">
    <reaction evidence="1">
        <text>alpha-D-glucose 6-phosphate = beta-D-fructose 6-phosphate</text>
        <dbReference type="Rhea" id="RHEA:11816"/>
        <dbReference type="ChEBI" id="CHEBI:57634"/>
        <dbReference type="ChEBI" id="CHEBI:58225"/>
        <dbReference type="EC" id="5.3.1.9"/>
    </reaction>
</comment>
<comment type="pathway">
    <text evidence="1">Carbohydrate biosynthesis; gluconeogenesis.</text>
</comment>
<comment type="pathway">
    <text evidence="1">Carbohydrate degradation; glycolysis; D-glyceraldehyde 3-phosphate and glycerone phosphate from D-glucose: step 2/4.</text>
</comment>
<comment type="subcellular location">
    <subcellularLocation>
        <location evidence="1">Cytoplasm</location>
    </subcellularLocation>
</comment>
<comment type="similarity">
    <text evidence="1">Belongs to the GPI family.</text>
</comment>
<reference key="1">
    <citation type="journal article" date="2009" name="J. Bacteriol.">
        <title>The genome of Burkholderia cenocepacia J2315, an epidemic pathogen of cystic fibrosis patients.</title>
        <authorList>
            <person name="Holden M.T."/>
            <person name="Seth-Smith H.M."/>
            <person name="Crossman L.C."/>
            <person name="Sebaihia M."/>
            <person name="Bentley S.D."/>
            <person name="Cerdeno-Tarraga A.M."/>
            <person name="Thomson N.R."/>
            <person name="Bason N."/>
            <person name="Quail M.A."/>
            <person name="Sharp S."/>
            <person name="Cherevach I."/>
            <person name="Churcher C."/>
            <person name="Goodhead I."/>
            <person name="Hauser H."/>
            <person name="Holroyd N."/>
            <person name="Mungall K."/>
            <person name="Scott P."/>
            <person name="Walker D."/>
            <person name="White B."/>
            <person name="Rose H."/>
            <person name="Iversen P."/>
            <person name="Mil-Homens D."/>
            <person name="Rocha E.P."/>
            <person name="Fialho A.M."/>
            <person name="Baldwin A."/>
            <person name="Dowson C."/>
            <person name="Barrell B.G."/>
            <person name="Govan J.R."/>
            <person name="Vandamme P."/>
            <person name="Hart C.A."/>
            <person name="Mahenthiralingam E."/>
            <person name="Parkhill J."/>
        </authorList>
    </citation>
    <scope>NUCLEOTIDE SEQUENCE [LARGE SCALE GENOMIC DNA]</scope>
    <source>
        <strain>ATCC BAA-245 / DSM 16553 / LMG 16656 / NCTC 13227 / J2315 / CF5610</strain>
    </source>
</reference>
<protein>
    <recommendedName>
        <fullName evidence="1">Glucose-6-phosphate isomerase</fullName>
        <shortName evidence="1">GPI</shortName>
        <ecNumber evidence="1">5.3.1.9</ecNumber>
    </recommendedName>
    <alternativeName>
        <fullName evidence="1">Phosphoglucose isomerase</fullName>
        <shortName evidence="1">PGI</shortName>
    </alternativeName>
    <alternativeName>
        <fullName evidence="1">Phosphohexose isomerase</fullName>
        <shortName evidence="1">PHI</shortName>
    </alternativeName>
</protein>
<sequence length="540" mass="59244">MTLKSLPAWTALQSHFEQIRHARLRDWFAPENDRAPTRAERFTIPGGGLAADFSKNRIDDETVRLLVQLARDAGVEARRDAMFAGEIVNPTEGRAALHTALRATDPQAPFHAQVSAERAKMATFARAVRSGTWTGYTGKRIRHVINIGIGGSDLGPKMVVHALHHVATPEISTHFVSNVDGADLARVLEQVDPEETLAIIVSKTFTTLETMTNARSLRDWFVARGCPEDALAKHFVGVSANPAEVVKFGIAADNVFEMWDWVGGRYSLWSAVGLSIMIAVGPEQFDELLAGANDMDRHFREAPLERNLPVLLGLIGIWYRNFFGSQSYLVAPYSEALHYLPSYLQQLEMESNGKSARLDGTFVDYPTSAVTWGEPGTNGQHAFFQMLHQGPTIVPIDFIAVLTPEHPLASHHPKLLANCFAQSEALMLGRTLEEARKVAGPGKEALAPHLTFPGNRPTTTLLVDALTPRALGALIALYEHKVLVQATVWDINPFDQWGVELGKILGKVVEADLSAESVDPAKHDSSTTALIERARAALKR</sequence>
<accession>B4EBL7</accession>